<dbReference type="EMBL" id="BC044374">
    <property type="protein sequence ID" value="AAH44374.1"/>
    <property type="molecule type" value="mRNA"/>
</dbReference>
<dbReference type="RefSeq" id="NP_956428.1">
    <property type="nucleotide sequence ID" value="NM_200134.1"/>
</dbReference>
<dbReference type="SMR" id="Q803R2"/>
<dbReference type="FunCoup" id="Q803R2">
    <property type="interactions" value="1951"/>
</dbReference>
<dbReference type="STRING" id="7955.ENSDARP00000073520"/>
<dbReference type="PaxDb" id="7955-ENSDARP00000073520"/>
<dbReference type="GeneID" id="393103"/>
<dbReference type="KEGG" id="dre:393103"/>
<dbReference type="AGR" id="ZFIN:ZDB-GENE-040426-698"/>
<dbReference type="CTD" id="51622"/>
<dbReference type="ZFIN" id="ZDB-GENE-040426-698">
    <property type="gene designation" value="ccz1"/>
</dbReference>
<dbReference type="eggNOG" id="KOG2622">
    <property type="taxonomic scope" value="Eukaryota"/>
</dbReference>
<dbReference type="InParanoid" id="Q803R2"/>
<dbReference type="OrthoDB" id="240546at2759"/>
<dbReference type="PRO" id="PR:Q803R2"/>
<dbReference type="Proteomes" id="UP000000437">
    <property type="component" value="Alternate scaffold 12"/>
</dbReference>
<dbReference type="Proteomes" id="UP000000437">
    <property type="component" value="Chromosome 12"/>
</dbReference>
<dbReference type="GO" id="GO:0043231">
    <property type="term" value="C:intracellular membrane-bounded organelle"/>
    <property type="evidence" value="ECO:0000318"/>
    <property type="project" value="GO_Central"/>
</dbReference>
<dbReference type="GO" id="GO:0005765">
    <property type="term" value="C:lysosomal membrane"/>
    <property type="evidence" value="ECO:0007669"/>
    <property type="project" value="UniProtKB-SubCell"/>
</dbReference>
<dbReference type="GO" id="GO:0035658">
    <property type="term" value="C:Mon1-Ccz1 complex"/>
    <property type="evidence" value="ECO:0007669"/>
    <property type="project" value="InterPro"/>
</dbReference>
<dbReference type="GO" id="GO:0016192">
    <property type="term" value="P:vesicle-mediated transport"/>
    <property type="evidence" value="ECO:0000318"/>
    <property type="project" value="GO_Central"/>
</dbReference>
<dbReference type="InterPro" id="IPR013176">
    <property type="entry name" value="Ccz1"/>
</dbReference>
<dbReference type="InterPro" id="IPR043987">
    <property type="entry name" value="CCZ1/INTU/HSP4_longin_1"/>
</dbReference>
<dbReference type="InterPro" id="IPR043989">
    <property type="entry name" value="CCZ1/INTU/HSP4_longin_3"/>
</dbReference>
<dbReference type="InterPro" id="IPR043988">
    <property type="entry name" value="CCZ1/INTU_longin_2"/>
</dbReference>
<dbReference type="PANTHER" id="PTHR13056">
    <property type="entry name" value="VACUOLAR FUSION PROTEIN CCZ1 HOMOLOG-RELATED"/>
    <property type="match status" value="1"/>
</dbReference>
<dbReference type="PANTHER" id="PTHR13056:SF0">
    <property type="entry name" value="VACUOLAR FUSION PROTEIN CCZ1 HOMOLOG-RELATED"/>
    <property type="match status" value="1"/>
</dbReference>
<dbReference type="Pfam" id="PF19031">
    <property type="entry name" value="Intu_longin_1"/>
    <property type="match status" value="1"/>
</dbReference>
<dbReference type="Pfam" id="PF19032">
    <property type="entry name" value="Intu_longin_2"/>
    <property type="match status" value="1"/>
</dbReference>
<dbReference type="Pfam" id="PF19033">
    <property type="entry name" value="Intu_longin_3"/>
    <property type="match status" value="1"/>
</dbReference>
<evidence type="ECO:0000250" key="1"/>
<evidence type="ECO:0000305" key="2"/>
<accession>Q803R2</accession>
<name>CCZ1_DANRE</name>
<feature type="chain" id="PRO_0000327401" description="Vacuolar fusion protein CCZ1 homolog">
    <location>
        <begin position="1"/>
        <end position="480"/>
    </location>
</feature>
<gene>
    <name type="primary">ccz1</name>
    <name type="ORF">zgc:55344</name>
</gene>
<proteinExistence type="evidence at transcript level"/>
<organism>
    <name type="scientific">Danio rerio</name>
    <name type="common">Zebrafish</name>
    <name type="synonym">Brachydanio rerio</name>
    <dbReference type="NCBI Taxonomy" id="7955"/>
    <lineage>
        <taxon>Eukaryota</taxon>
        <taxon>Metazoa</taxon>
        <taxon>Chordata</taxon>
        <taxon>Craniata</taxon>
        <taxon>Vertebrata</taxon>
        <taxon>Euteleostomi</taxon>
        <taxon>Actinopterygii</taxon>
        <taxon>Neopterygii</taxon>
        <taxon>Teleostei</taxon>
        <taxon>Ostariophysi</taxon>
        <taxon>Cypriniformes</taxon>
        <taxon>Danionidae</taxon>
        <taxon>Danioninae</taxon>
        <taxon>Danio</taxon>
    </lineage>
</organism>
<protein>
    <recommendedName>
        <fullName>Vacuolar fusion protein CCZ1 homolog</fullName>
    </recommendedName>
</protein>
<comment type="subcellular location">
    <subcellularLocation>
        <location evidence="1">Lysosome membrane</location>
    </subcellularLocation>
</comment>
<comment type="similarity">
    <text evidence="2">Belongs to the CCZ1 family.</text>
</comment>
<keyword id="KW-0458">Lysosome</keyword>
<keyword id="KW-0472">Membrane</keyword>
<keyword id="KW-1185">Reference proteome</keyword>
<sequence>MLMISPRMASGMQEKQYTPSLLSFFIYNPKFGPREGEEEKKILFYHPIEIEKNEKIRNVGLCEAIVQFTRTFCPTKPAKSLHTQKNRQFFHEPEENYWMVMVVRNPMVEKPNKDGKPPTVEYQEEEIIDSVYGSVLQQCYSMYKLFNGTFSRAFEAGGVELLTQKLEKFFYRYLQTLHLQSCDLLDVFGGISFFPLDKMTYLKIQSFVNRVEESLSLVKYTAFLYNDQLIWSGLEQDDMRILYKYLTTSLFPRHTEPELAGRDSPLRPEVAGNLLHYGRFLTGPANLKDPEAKFRFPRIFVNTEDSCEELHLIVYKAMSAAVCFMINASVDLNREFCEKLDSLVGPQLTLLASDICEQYNINRRISGPEKEPQFKFIYFNHMNLAEKSTIHMRKMASVSLTSVHPDLMKILGDINCDFARVDEDEEIIVKAMTDYWVVGKKSDQRELYVILNQKNANLIEVNEEVKRLCATQFNNIFFLD</sequence>
<reference key="1">
    <citation type="submission" date="2003-01" db="EMBL/GenBank/DDBJ databases">
        <authorList>
            <consortium name="NIH - Zebrafish Gene Collection (ZGC) project"/>
        </authorList>
    </citation>
    <scope>NUCLEOTIDE SEQUENCE [LARGE SCALE MRNA]</scope>
    <source>
        <strain>AB</strain>
    </source>
</reference>